<evidence type="ECO:0000250" key="1">
    <source>
        <dbReference type="UniProtKB" id="P0AC38"/>
    </source>
</evidence>
<evidence type="ECO:0000250" key="2">
    <source>
        <dbReference type="UniProtKB" id="Q9LCC6"/>
    </source>
</evidence>
<evidence type="ECO:0000256" key="3">
    <source>
        <dbReference type="SAM" id="MobiDB-lite"/>
    </source>
</evidence>
<evidence type="ECO:0000303" key="4">
    <source>
    </source>
</evidence>
<evidence type="ECO:0000305" key="5"/>
<reference key="1">
    <citation type="journal article" date="1995" name="Gene">
        <title>Cloning and sequence determination of the aspartase-encoding gene from Brevibacterium flavum MJ233.</title>
        <authorList>
            <person name="Asai Y."/>
            <person name="Inui M."/>
            <person name="Vertes A."/>
            <person name="Kobayashi M."/>
            <person name="Yukawa H."/>
        </authorList>
    </citation>
    <scope>NUCLEOTIDE SEQUENCE [GENOMIC DNA]</scope>
    <source>
        <strain>MJ233</strain>
    </source>
</reference>
<reference key="2">
    <citation type="journal article" date="2003" name="Appl. Microbiol. Biotechnol.">
        <title>The Corynebacterium glutamicum genome: features and impacts on biotechnological processes.</title>
        <authorList>
            <person name="Ikeda M."/>
            <person name="Nakagawa S."/>
        </authorList>
    </citation>
    <scope>NUCLEOTIDE SEQUENCE [LARGE SCALE GENOMIC DNA]</scope>
    <source>
        <strain>ATCC 13032 / DSM 20300 / JCM 1318 / BCRC 11384 / CCUG 27702 / LMG 3730 / NBRC 12168 / NCIMB 10025 / NRRL B-2784 / 534</strain>
    </source>
</reference>
<reference key="3">
    <citation type="journal article" date="2003" name="J. Biotechnol.">
        <title>The complete Corynebacterium glutamicum ATCC 13032 genome sequence and its impact on the production of L-aspartate-derived amino acids and vitamins.</title>
        <authorList>
            <person name="Kalinowski J."/>
            <person name="Bathe B."/>
            <person name="Bartels D."/>
            <person name="Bischoff N."/>
            <person name="Bott M."/>
            <person name="Burkovski A."/>
            <person name="Dusch N."/>
            <person name="Eggeling L."/>
            <person name="Eikmanns B.J."/>
            <person name="Gaigalat L."/>
            <person name="Goesmann A."/>
            <person name="Hartmann M."/>
            <person name="Huthmacher K."/>
            <person name="Kraemer R."/>
            <person name="Linke B."/>
            <person name="McHardy A.C."/>
            <person name="Meyer F."/>
            <person name="Moeckel B."/>
            <person name="Pfefferle W."/>
            <person name="Puehler A."/>
            <person name="Rey D.A."/>
            <person name="Rueckert C."/>
            <person name="Rupp O."/>
            <person name="Sahm H."/>
            <person name="Wendisch V.F."/>
            <person name="Wiegraebe I."/>
            <person name="Tauch A."/>
        </authorList>
    </citation>
    <scope>NUCLEOTIDE SEQUENCE [LARGE SCALE GENOMIC DNA]</scope>
    <source>
        <strain>ATCC 13032 / DSM 20300 / JCM 1318 / BCRC 11384 / CCUG 27702 / LMG 3730 / NBRC 12168 / NCIMB 10025 / NRRL B-2784 / 534</strain>
    </source>
</reference>
<proteinExistence type="inferred from homology"/>
<feature type="chain" id="PRO_0000161337" description="Aspartate ammonia-lyase">
    <location>
        <begin position="1"/>
        <end position="526"/>
    </location>
</feature>
<feature type="region of interest" description="Disordered" evidence="3">
    <location>
        <begin position="1"/>
        <end position="44"/>
    </location>
</feature>
<feature type="region of interest" description="SS loop" evidence="2">
    <location>
        <begin position="371"/>
        <end position="380"/>
    </location>
</feature>
<feature type="compositionally biased region" description="Basic and acidic residues" evidence="3">
    <location>
        <begin position="10"/>
        <end position="20"/>
    </location>
</feature>
<feature type="compositionally biased region" description="Polar residues" evidence="3">
    <location>
        <begin position="24"/>
        <end position="39"/>
    </location>
</feature>
<feature type="active site" description="Proton acceptor" evidence="2">
    <location>
        <position position="372"/>
    </location>
</feature>
<feature type="binding site" evidence="2">
    <location>
        <position position="155"/>
    </location>
    <ligand>
        <name>L-aspartate</name>
        <dbReference type="ChEBI" id="CHEBI:29991"/>
    </ligand>
</feature>
<feature type="binding site" evidence="2">
    <location>
        <position position="194"/>
    </location>
    <ligand>
        <name>L-aspartate</name>
        <dbReference type="ChEBI" id="CHEBI:29991"/>
    </ligand>
</feature>
<feature type="binding site" evidence="2">
    <location>
        <position position="195"/>
    </location>
    <ligand>
        <name>L-aspartate</name>
        <dbReference type="ChEBI" id="CHEBI:29991"/>
    </ligand>
</feature>
<feature type="binding site" evidence="2">
    <location>
        <position position="196"/>
    </location>
    <ligand>
        <name>L-aspartate</name>
        <dbReference type="ChEBI" id="CHEBI:29991"/>
    </ligand>
</feature>
<feature type="binding site" evidence="2">
    <location>
        <position position="241"/>
    </location>
    <ligand>
        <name>L-aspartate</name>
        <dbReference type="ChEBI" id="CHEBI:29991"/>
    </ligand>
</feature>
<feature type="binding site" evidence="2">
    <location>
        <position position="373"/>
    </location>
    <ligand>
        <name>L-aspartate</name>
        <dbReference type="ChEBI" id="CHEBI:29991"/>
    </ligand>
</feature>
<feature type="binding site" evidence="2">
    <location>
        <position position="378"/>
    </location>
    <ligand>
        <name>L-aspartate</name>
        <dbReference type="ChEBI" id="CHEBI:29991"/>
    </ligand>
</feature>
<feature type="sequence conflict" description="In Ref. 1; BAA04987." evidence="5" ref="1">
    <original>E</original>
    <variation>G</variation>
    <location>
        <position position="138"/>
    </location>
</feature>
<sequence length="526" mass="57569">MSKTSNKSSADSKNDAKAEDIVNGENQIATNESQSSDSAAVSERVVEPKTTVQKKFRIESDLLGELQIPSHAYYGVHTLRAVDNFQISRTTINHVPDFIRGMVQVKKAAALANRRLHTLPAQKAEAIVWACDQILIEERCMDQFPIDVFQGGAGTSLNMNTNEVVANLALEFLGHEKGEYHILHPMDDVNMSQSTNDSYPTGFRLGIYAGLQTLIAEIDELQVAFRHKGNEFVDIIKMGRTQLQDAVPMSLGEEFRAFAHNLAEEQTVLREAANRLLEVNLGATAIGTGVNTPAGYRHQVVAALSEVTGLELKSARDLIEATSDTGAYVHAHSAIKRAAMKLSKICNDLRLLSSGPRAGLNEINLPPRQAGSSIMPAKVNPVIPEVVNQVCFKVFGNDLTVTMAAEAGQLQLNVMEPVIGESLFQSLRILGNAAKTLREKCVVGITANADVCRAYVDNSIGIITYLNPFLGHDIGDQIGKEAAETGRPVRELILEKKLMDEKTLEAVLSKENLMHPMFRGRLYLEN</sequence>
<accession>Q59200</accession>
<comment type="function">
    <text evidence="1">Catalyzes the reversible conversion of L-aspartate to fumarate and ammonia.</text>
</comment>
<comment type="catalytic activity">
    <reaction evidence="1">
        <text>L-aspartate = fumarate + NH4(+)</text>
        <dbReference type="Rhea" id="RHEA:16601"/>
        <dbReference type="ChEBI" id="CHEBI:28938"/>
        <dbReference type="ChEBI" id="CHEBI:29806"/>
        <dbReference type="ChEBI" id="CHEBI:29991"/>
        <dbReference type="EC" id="4.3.1.1"/>
    </reaction>
</comment>
<comment type="subunit">
    <text evidence="1">Homotetramer.</text>
</comment>
<comment type="similarity">
    <text evidence="5">Belongs to the class-II fumarase/aspartase family. Aspartase subfamily.</text>
</comment>
<gene>
    <name evidence="4" type="primary">aspA</name>
    <name type="ordered locus">Cgl1503</name>
    <name type="ordered locus">cg1697</name>
</gene>
<dbReference type="EC" id="4.3.1.1" evidence="1"/>
<dbReference type="EMBL" id="D25316">
    <property type="protein sequence ID" value="BAA04987.1"/>
    <property type="molecule type" value="Genomic_DNA"/>
</dbReference>
<dbReference type="EMBL" id="BA000036">
    <property type="protein sequence ID" value="BAB98896.1"/>
    <property type="molecule type" value="Genomic_DNA"/>
</dbReference>
<dbReference type="EMBL" id="BX927152">
    <property type="protein sequence ID" value="CAF21511.1"/>
    <property type="molecule type" value="Genomic_DNA"/>
</dbReference>
<dbReference type="PIR" id="JC4101">
    <property type="entry name" value="JC4101"/>
</dbReference>
<dbReference type="RefSeq" id="NP_600719.1">
    <property type="nucleotide sequence ID" value="NC_003450.3"/>
</dbReference>
<dbReference type="RefSeq" id="WP_011014409.1">
    <property type="nucleotide sequence ID" value="NC_006958.1"/>
</dbReference>
<dbReference type="SMR" id="Q59200"/>
<dbReference type="STRING" id="196627.cg1697"/>
<dbReference type="GeneID" id="1019476"/>
<dbReference type="KEGG" id="cgb:cg1697"/>
<dbReference type="KEGG" id="cgl:Cgl1503"/>
<dbReference type="PATRIC" id="fig|196627.13.peg.1470"/>
<dbReference type="eggNOG" id="COG1027">
    <property type="taxonomic scope" value="Bacteria"/>
</dbReference>
<dbReference type="HOGENOM" id="CLU_021594_4_0_11"/>
<dbReference type="OrthoDB" id="9802809at2"/>
<dbReference type="BioCyc" id="CORYNE:G18NG-11086-MONOMER"/>
<dbReference type="Proteomes" id="UP000000582">
    <property type="component" value="Chromosome"/>
</dbReference>
<dbReference type="Proteomes" id="UP000001009">
    <property type="component" value="Chromosome"/>
</dbReference>
<dbReference type="GO" id="GO:0005829">
    <property type="term" value="C:cytosol"/>
    <property type="evidence" value="ECO:0007669"/>
    <property type="project" value="TreeGrafter"/>
</dbReference>
<dbReference type="GO" id="GO:0008797">
    <property type="term" value="F:aspartate ammonia-lyase activity"/>
    <property type="evidence" value="ECO:0007669"/>
    <property type="project" value="UniProtKB-EC"/>
</dbReference>
<dbReference type="GO" id="GO:0006531">
    <property type="term" value="P:aspartate metabolic process"/>
    <property type="evidence" value="ECO:0007669"/>
    <property type="project" value="InterPro"/>
</dbReference>
<dbReference type="GO" id="GO:0006099">
    <property type="term" value="P:tricarboxylic acid cycle"/>
    <property type="evidence" value="ECO:0007669"/>
    <property type="project" value="InterPro"/>
</dbReference>
<dbReference type="CDD" id="cd01357">
    <property type="entry name" value="Aspartase"/>
    <property type="match status" value="1"/>
</dbReference>
<dbReference type="FunFam" id="1.10.275.10:FF:000001">
    <property type="entry name" value="Fumarate hydratase, mitochondrial"/>
    <property type="match status" value="1"/>
</dbReference>
<dbReference type="FunFam" id="1.20.200.10:FF:000001">
    <property type="entry name" value="Fumarate hydratase, mitochondrial"/>
    <property type="match status" value="1"/>
</dbReference>
<dbReference type="Gene3D" id="1.10.40.30">
    <property type="entry name" value="Fumarase/aspartase (C-terminal domain)"/>
    <property type="match status" value="1"/>
</dbReference>
<dbReference type="Gene3D" id="1.20.200.10">
    <property type="entry name" value="Fumarase/aspartase (Central domain)"/>
    <property type="match status" value="1"/>
</dbReference>
<dbReference type="Gene3D" id="1.10.275.10">
    <property type="entry name" value="Fumarase/aspartase (N-terminal domain)"/>
    <property type="match status" value="1"/>
</dbReference>
<dbReference type="InterPro" id="IPR004708">
    <property type="entry name" value="ApsA"/>
</dbReference>
<dbReference type="InterPro" id="IPR051546">
    <property type="entry name" value="Aspartate_Ammonia-Lyase"/>
</dbReference>
<dbReference type="InterPro" id="IPR024083">
    <property type="entry name" value="Fumarase/histidase_N"/>
</dbReference>
<dbReference type="InterPro" id="IPR018951">
    <property type="entry name" value="Fumarase_C_C"/>
</dbReference>
<dbReference type="InterPro" id="IPR020557">
    <property type="entry name" value="Fumarate_lyase_CS"/>
</dbReference>
<dbReference type="InterPro" id="IPR000362">
    <property type="entry name" value="Fumarate_lyase_fam"/>
</dbReference>
<dbReference type="InterPro" id="IPR022761">
    <property type="entry name" value="Fumarate_lyase_N"/>
</dbReference>
<dbReference type="InterPro" id="IPR008948">
    <property type="entry name" value="L-Aspartase-like"/>
</dbReference>
<dbReference type="NCBIfam" id="TIGR00839">
    <property type="entry name" value="aspA"/>
    <property type="match status" value="1"/>
</dbReference>
<dbReference type="NCBIfam" id="NF008909">
    <property type="entry name" value="PRK12273.1"/>
    <property type="match status" value="1"/>
</dbReference>
<dbReference type="PANTHER" id="PTHR42696">
    <property type="entry name" value="ASPARTATE AMMONIA-LYASE"/>
    <property type="match status" value="1"/>
</dbReference>
<dbReference type="PANTHER" id="PTHR42696:SF2">
    <property type="entry name" value="ASPARTATE AMMONIA-LYASE"/>
    <property type="match status" value="1"/>
</dbReference>
<dbReference type="Pfam" id="PF10415">
    <property type="entry name" value="FumaraseC_C"/>
    <property type="match status" value="1"/>
</dbReference>
<dbReference type="Pfam" id="PF00206">
    <property type="entry name" value="Lyase_1"/>
    <property type="match status" value="1"/>
</dbReference>
<dbReference type="PRINTS" id="PR00145">
    <property type="entry name" value="ARGSUCLYASE"/>
</dbReference>
<dbReference type="PRINTS" id="PR00149">
    <property type="entry name" value="FUMRATELYASE"/>
</dbReference>
<dbReference type="SUPFAM" id="SSF48557">
    <property type="entry name" value="L-aspartase-like"/>
    <property type="match status" value="1"/>
</dbReference>
<dbReference type="PROSITE" id="PS00163">
    <property type="entry name" value="FUMARATE_LYASES"/>
    <property type="match status" value="1"/>
</dbReference>
<name>ASPA_CORGL</name>
<protein>
    <recommendedName>
        <fullName evidence="1">Aspartate ammonia-lyase</fullName>
        <shortName evidence="4">Aspartase</shortName>
        <ecNumber evidence="1">4.3.1.1</ecNumber>
    </recommendedName>
</protein>
<organism>
    <name type="scientific">Corynebacterium glutamicum (strain ATCC 13032 / DSM 20300 / JCM 1318 / BCRC 11384 / CCUG 27702 / LMG 3730 / NBRC 12168 / NCIMB 10025 / NRRL B-2784 / 534)</name>
    <dbReference type="NCBI Taxonomy" id="196627"/>
    <lineage>
        <taxon>Bacteria</taxon>
        <taxon>Bacillati</taxon>
        <taxon>Actinomycetota</taxon>
        <taxon>Actinomycetes</taxon>
        <taxon>Mycobacteriales</taxon>
        <taxon>Corynebacteriaceae</taxon>
        <taxon>Corynebacterium</taxon>
    </lineage>
</organism>
<keyword id="KW-0456">Lyase</keyword>
<keyword id="KW-1185">Reference proteome</keyword>